<keyword id="KW-0010">Activator</keyword>
<keyword id="KW-0175">Coiled coil</keyword>
<keyword id="KW-0963">Cytoplasm</keyword>
<keyword id="KW-0238">DNA-binding</keyword>
<keyword id="KW-0539">Nucleus</keyword>
<keyword id="KW-0597">Phosphoprotein</keyword>
<keyword id="KW-1185">Reference proteome</keyword>
<keyword id="KW-0346">Stress response</keyword>
<keyword id="KW-0804">Transcription</keyword>
<keyword id="KW-0805">Transcription regulation</keyword>
<reference key="1">
    <citation type="journal article" date="2005" name="Genome Res.">
        <title>Sequence, annotation, and analysis of synteny between rice chromosome 3 and diverged grass species.</title>
        <authorList>
            <consortium name="The rice chromosome 3 sequencing consortium"/>
            <person name="Buell C.R."/>
            <person name="Yuan Q."/>
            <person name="Ouyang S."/>
            <person name="Liu J."/>
            <person name="Zhu W."/>
            <person name="Wang A."/>
            <person name="Maiti R."/>
            <person name="Haas B."/>
            <person name="Wortman J."/>
            <person name="Pertea M."/>
            <person name="Jones K.M."/>
            <person name="Kim M."/>
            <person name="Overton L."/>
            <person name="Tsitrin T."/>
            <person name="Fadrosh D."/>
            <person name="Bera J."/>
            <person name="Weaver B."/>
            <person name="Jin S."/>
            <person name="Johri S."/>
            <person name="Reardon M."/>
            <person name="Webb K."/>
            <person name="Hill J."/>
            <person name="Moffat K."/>
            <person name="Tallon L."/>
            <person name="Van Aken S."/>
            <person name="Lewis M."/>
            <person name="Utterback T."/>
            <person name="Feldblyum T."/>
            <person name="Zismann V."/>
            <person name="Iobst S."/>
            <person name="Hsiao J."/>
            <person name="de Vazeille A.R."/>
            <person name="Salzberg S.L."/>
            <person name="White O."/>
            <person name="Fraser C.M."/>
            <person name="Yu Y."/>
            <person name="Kim H."/>
            <person name="Rambo T."/>
            <person name="Currie J."/>
            <person name="Collura K."/>
            <person name="Kernodle-Thompson S."/>
            <person name="Wei F."/>
            <person name="Kudrna K."/>
            <person name="Ammiraju J.S.S."/>
            <person name="Luo M."/>
            <person name="Goicoechea J.L."/>
            <person name="Wing R.A."/>
            <person name="Henry D."/>
            <person name="Oates R."/>
            <person name="Palmer M."/>
            <person name="Pries G."/>
            <person name="Saski C."/>
            <person name="Simmons J."/>
            <person name="Soderlund C."/>
            <person name="Nelson W."/>
            <person name="de la Bastide M."/>
            <person name="Spiegel L."/>
            <person name="Nascimento L."/>
            <person name="Huang E."/>
            <person name="Preston R."/>
            <person name="Zutavern T."/>
            <person name="Palmer L."/>
            <person name="O'Shaughnessy A."/>
            <person name="Dike S."/>
            <person name="McCombie W.R."/>
            <person name="Minx P."/>
            <person name="Cordum H."/>
            <person name="Wilson R."/>
            <person name="Jin W."/>
            <person name="Lee H.R."/>
            <person name="Jiang J."/>
            <person name="Jackson S."/>
        </authorList>
    </citation>
    <scope>NUCLEOTIDE SEQUENCE [LARGE SCALE GENOMIC DNA]</scope>
    <source>
        <strain>cv. Nipponbare</strain>
    </source>
</reference>
<reference key="2">
    <citation type="journal article" date="2005" name="Nature">
        <title>The map-based sequence of the rice genome.</title>
        <authorList>
            <consortium name="International rice genome sequencing project (IRGSP)"/>
        </authorList>
    </citation>
    <scope>NUCLEOTIDE SEQUENCE [LARGE SCALE GENOMIC DNA]</scope>
    <source>
        <strain>cv. Nipponbare</strain>
    </source>
</reference>
<reference key="3">
    <citation type="journal article" date="2008" name="Nucleic Acids Res.">
        <title>The rice annotation project database (RAP-DB): 2008 update.</title>
        <authorList>
            <consortium name="The rice annotation project (RAP)"/>
        </authorList>
    </citation>
    <scope>GENOME REANNOTATION</scope>
    <source>
        <strain>cv. Nipponbare</strain>
    </source>
</reference>
<reference key="4">
    <citation type="journal article" date="2013" name="Rice">
        <title>Improvement of the Oryza sativa Nipponbare reference genome using next generation sequence and optical map data.</title>
        <authorList>
            <person name="Kawahara Y."/>
            <person name="de la Bastide M."/>
            <person name="Hamilton J.P."/>
            <person name="Kanamori H."/>
            <person name="McCombie W.R."/>
            <person name="Ouyang S."/>
            <person name="Schwartz D.C."/>
            <person name="Tanaka T."/>
            <person name="Wu J."/>
            <person name="Zhou S."/>
            <person name="Childs K.L."/>
            <person name="Davidson R.M."/>
            <person name="Lin H."/>
            <person name="Quesada-Ocampo L."/>
            <person name="Vaillancourt B."/>
            <person name="Sakai H."/>
            <person name="Lee S.S."/>
            <person name="Kim J."/>
            <person name="Numa H."/>
            <person name="Itoh T."/>
            <person name="Buell C.R."/>
            <person name="Matsumoto T."/>
        </authorList>
    </citation>
    <scope>GENOME REANNOTATION</scope>
    <source>
        <strain>cv. Nipponbare</strain>
    </source>
</reference>
<reference key="5">
    <citation type="journal article" date="2005" name="PLoS Biol.">
        <title>The genomes of Oryza sativa: a history of duplications.</title>
        <authorList>
            <person name="Yu J."/>
            <person name="Wang J."/>
            <person name="Lin W."/>
            <person name="Li S."/>
            <person name="Li H."/>
            <person name="Zhou J."/>
            <person name="Ni P."/>
            <person name="Dong W."/>
            <person name="Hu S."/>
            <person name="Zeng C."/>
            <person name="Zhang J."/>
            <person name="Zhang Y."/>
            <person name="Li R."/>
            <person name="Xu Z."/>
            <person name="Li S."/>
            <person name="Li X."/>
            <person name="Zheng H."/>
            <person name="Cong L."/>
            <person name="Lin L."/>
            <person name="Yin J."/>
            <person name="Geng J."/>
            <person name="Li G."/>
            <person name="Shi J."/>
            <person name="Liu J."/>
            <person name="Lv H."/>
            <person name="Li J."/>
            <person name="Wang J."/>
            <person name="Deng Y."/>
            <person name="Ran L."/>
            <person name="Shi X."/>
            <person name="Wang X."/>
            <person name="Wu Q."/>
            <person name="Li C."/>
            <person name="Ren X."/>
            <person name="Wang J."/>
            <person name="Wang X."/>
            <person name="Li D."/>
            <person name="Liu D."/>
            <person name="Zhang X."/>
            <person name="Ji Z."/>
            <person name="Zhao W."/>
            <person name="Sun Y."/>
            <person name="Zhang Z."/>
            <person name="Bao J."/>
            <person name="Han Y."/>
            <person name="Dong L."/>
            <person name="Ji J."/>
            <person name="Chen P."/>
            <person name="Wu S."/>
            <person name="Liu J."/>
            <person name="Xiao Y."/>
            <person name="Bu D."/>
            <person name="Tan J."/>
            <person name="Yang L."/>
            <person name="Ye C."/>
            <person name="Zhang J."/>
            <person name="Xu J."/>
            <person name="Zhou Y."/>
            <person name="Yu Y."/>
            <person name="Zhang B."/>
            <person name="Zhuang S."/>
            <person name="Wei H."/>
            <person name="Liu B."/>
            <person name="Lei M."/>
            <person name="Yu H."/>
            <person name="Li Y."/>
            <person name="Xu H."/>
            <person name="Wei S."/>
            <person name="He X."/>
            <person name="Fang L."/>
            <person name="Zhang Z."/>
            <person name="Zhang Y."/>
            <person name="Huang X."/>
            <person name="Su Z."/>
            <person name="Tong W."/>
            <person name="Li J."/>
            <person name="Tong Z."/>
            <person name="Li S."/>
            <person name="Ye J."/>
            <person name="Wang L."/>
            <person name="Fang L."/>
            <person name="Lei T."/>
            <person name="Chen C.-S."/>
            <person name="Chen H.-C."/>
            <person name="Xu Z."/>
            <person name="Li H."/>
            <person name="Huang H."/>
            <person name="Zhang F."/>
            <person name="Xu H."/>
            <person name="Li N."/>
            <person name="Zhao C."/>
            <person name="Li S."/>
            <person name="Dong L."/>
            <person name="Huang Y."/>
            <person name="Li L."/>
            <person name="Xi Y."/>
            <person name="Qi Q."/>
            <person name="Li W."/>
            <person name="Zhang B."/>
            <person name="Hu W."/>
            <person name="Zhang Y."/>
            <person name="Tian X."/>
            <person name="Jiao Y."/>
            <person name="Liang X."/>
            <person name="Jin J."/>
            <person name="Gao L."/>
            <person name="Zheng W."/>
            <person name="Hao B."/>
            <person name="Liu S.-M."/>
            <person name="Wang W."/>
            <person name="Yuan L."/>
            <person name="Cao M."/>
            <person name="McDermott J."/>
            <person name="Samudrala R."/>
            <person name="Wang J."/>
            <person name="Wong G.K.-S."/>
            <person name="Yang H."/>
        </authorList>
    </citation>
    <scope>NUCLEOTIDE SEQUENCE [LARGE SCALE GENOMIC DNA]</scope>
    <source>
        <strain>cv. Nipponbare</strain>
    </source>
</reference>
<reference key="6">
    <citation type="journal article" date="2003" name="Science">
        <title>Collection, mapping, and annotation of over 28,000 cDNA clones from japonica rice.</title>
        <authorList>
            <consortium name="The rice full-length cDNA consortium"/>
        </authorList>
    </citation>
    <scope>NUCLEOTIDE SEQUENCE [LARGE SCALE MRNA]</scope>
    <source>
        <strain>cv. Nipponbare</strain>
    </source>
</reference>
<reference key="7">
    <citation type="journal article" date="2004" name="J. Biosci.">
        <title>Heat stress response in plants: a complex game with chaperones and more than twenty heat stress transcription factors.</title>
        <authorList>
            <person name="Baniwal S.K."/>
            <person name="Bharti K."/>
            <person name="Chan K.Y."/>
            <person name="Fauth M."/>
            <person name="Ganguli A."/>
            <person name="Kotak S."/>
            <person name="Mishra S.K."/>
            <person name="Nover L."/>
            <person name="Port M."/>
            <person name="Scharf K.-D."/>
            <person name="Tripp J."/>
            <person name="Weber C."/>
            <person name="Zielinski D."/>
            <person name="von Koskull-Doering P."/>
        </authorList>
    </citation>
    <scope>GENE FAMILY</scope>
    <scope>NOMENCLATURE</scope>
</reference>
<reference key="8">
    <citation type="journal article" date="2008" name="J. Genet. Genomics">
        <title>Genome-wide analysis of heat shock transcription factor families in rice and Arabidopsis.</title>
        <authorList>
            <person name="Guo J."/>
            <person name="Wu J."/>
            <person name="Ji Q."/>
            <person name="Wang C."/>
            <person name="Luo L."/>
            <person name="Yuan Y."/>
            <person name="Wang Y."/>
            <person name="Wang J."/>
        </authorList>
    </citation>
    <scope>GENE FAMILY</scope>
    <scope>NOMENCLATURE</scope>
    <scope>DOMAIN AHA</scope>
</reference>
<reference key="9">
    <citation type="journal article" date="2008" name="Planta">
        <title>Expression of rice heat stress transcription factor OsHsfA2e enhances tolerance to environmental stresses in transgenic Arabidopsis.</title>
        <authorList>
            <person name="Yokotani N."/>
            <person name="Ichikawa T."/>
            <person name="Kondou Y."/>
            <person name="Matsui M."/>
            <person name="Hirochika H."/>
            <person name="Iwabuchi M."/>
            <person name="Oda K."/>
        </authorList>
    </citation>
    <scope>FUNCTION</scope>
    <scope>SUBCELLULAR LOCATION</scope>
    <scope>INDUCTION</scope>
</reference>
<sequence>MNYRVVNPVKVESGPSTGVANGQPPRPMDGLADGGPPPFLTKTYDMVDDPTTDAVVSWSATNNSFVVWDPHLFGNVLLPRYFKHNNFSSFVRQLNTYGFRKVDPDKWEFANEGFLRGQKHLLKSIKRRKPPNSSPSQQSLGSFLEVGHFGYEGEIDQLKRDKHLLMAEVVKLRQEQQNTKSDLQAMEQKLQGTEQKQQHMMAFLSRVMHNPEFIRQLFSQSEMRKELEEFVSKKRRRRIDQGPELDSMGTGSSPEQVSQVMFEPHDPVDSLFNGVPSDLESSSVEANGGKAQQDVASSSSEHGKIKPSNGELNEDFWEDLLHEGGLDEDTRNPAIDDMNLLSQKMGYLNSSSTKSPQ</sequence>
<dbReference type="EMBL" id="AC092076">
    <property type="protein sequence ID" value="AAT76423.1"/>
    <property type="molecule type" value="Genomic_DNA"/>
</dbReference>
<dbReference type="EMBL" id="DP000009">
    <property type="protein sequence ID" value="ABF99338.1"/>
    <property type="molecule type" value="Genomic_DNA"/>
</dbReference>
<dbReference type="EMBL" id="AP008209">
    <property type="protein sequence ID" value="BAF13466.1"/>
    <property type="molecule type" value="Genomic_DNA"/>
</dbReference>
<dbReference type="EMBL" id="AP014959">
    <property type="protein sequence ID" value="BAS86837.1"/>
    <property type="molecule type" value="Genomic_DNA"/>
</dbReference>
<dbReference type="EMBL" id="CM000140">
    <property type="protein sequence ID" value="EAZ28905.1"/>
    <property type="molecule type" value="Genomic_DNA"/>
</dbReference>
<dbReference type="EMBL" id="AK068660">
    <property type="status" value="NOT_ANNOTATED_CDS"/>
    <property type="molecule type" value="mRNA"/>
</dbReference>
<dbReference type="RefSeq" id="XP_015630486.1">
    <property type="nucleotide sequence ID" value="XM_015775000.1"/>
</dbReference>
<dbReference type="SMR" id="Q6F388"/>
<dbReference type="FunCoup" id="Q6F388">
    <property type="interactions" value="124"/>
</dbReference>
<dbReference type="STRING" id="39947.Q6F388"/>
<dbReference type="PaxDb" id="39947-Q6F388"/>
<dbReference type="EnsemblPlants" id="Os03t0795900-01">
    <property type="protein sequence ID" value="Os03t0795900-01"/>
    <property type="gene ID" value="Os03g0795900"/>
</dbReference>
<dbReference type="Gramene" id="Os03t0795900-01">
    <property type="protein sequence ID" value="Os03t0795900-01"/>
    <property type="gene ID" value="Os03g0795900"/>
</dbReference>
<dbReference type="KEGG" id="dosa:Os03g0795900"/>
<dbReference type="eggNOG" id="KOG0627">
    <property type="taxonomic scope" value="Eukaryota"/>
</dbReference>
<dbReference type="HOGENOM" id="CLU_030308_1_0_1"/>
<dbReference type="InParanoid" id="Q6F388"/>
<dbReference type="OMA" id="IDQGPSG"/>
<dbReference type="OrthoDB" id="60033at2759"/>
<dbReference type="Proteomes" id="UP000000763">
    <property type="component" value="Chromosome 3"/>
</dbReference>
<dbReference type="Proteomes" id="UP000007752">
    <property type="component" value="Chromosome 3"/>
</dbReference>
<dbReference type="Proteomes" id="UP000059680">
    <property type="component" value="Chromosome 3"/>
</dbReference>
<dbReference type="GO" id="GO:0005737">
    <property type="term" value="C:cytoplasm"/>
    <property type="evidence" value="ECO:0007669"/>
    <property type="project" value="UniProtKB-SubCell"/>
</dbReference>
<dbReference type="GO" id="GO:0005634">
    <property type="term" value="C:nucleus"/>
    <property type="evidence" value="ECO:0000318"/>
    <property type="project" value="GO_Central"/>
</dbReference>
<dbReference type="GO" id="GO:0003700">
    <property type="term" value="F:DNA-binding transcription factor activity"/>
    <property type="evidence" value="ECO:0000318"/>
    <property type="project" value="GO_Central"/>
</dbReference>
<dbReference type="GO" id="GO:0043565">
    <property type="term" value="F:sequence-specific DNA binding"/>
    <property type="evidence" value="ECO:0007669"/>
    <property type="project" value="InterPro"/>
</dbReference>
<dbReference type="GO" id="GO:0034605">
    <property type="term" value="P:cellular response to heat"/>
    <property type="evidence" value="ECO:0000318"/>
    <property type="project" value="GO_Central"/>
</dbReference>
<dbReference type="GO" id="GO:0006357">
    <property type="term" value="P:regulation of transcription by RNA polymerase II"/>
    <property type="evidence" value="ECO:0000318"/>
    <property type="project" value="GO_Central"/>
</dbReference>
<dbReference type="FunFam" id="1.10.10.10:FF:000057">
    <property type="entry name" value="Heat shock transcription factor 1"/>
    <property type="match status" value="1"/>
</dbReference>
<dbReference type="Gene3D" id="1.10.10.10">
    <property type="entry name" value="Winged helix-like DNA-binding domain superfamily/Winged helix DNA-binding domain"/>
    <property type="match status" value="1"/>
</dbReference>
<dbReference type="InterPro" id="IPR000232">
    <property type="entry name" value="HSF_DNA-bd"/>
</dbReference>
<dbReference type="InterPro" id="IPR036388">
    <property type="entry name" value="WH-like_DNA-bd_sf"/>
</dbReference>
<dbReference type="InterPro" id="IPR036390">
    <property type="entry name" value="WH_DNA-bd_sf"/>
</dbReference>
<dbReference type="PANTHER" id="PTHR10015">
    <property type="entry name" value="HEAT SHOCK TRANSCRIPTION FACTOR"/>
    <property type="match status" value="1"/>
</dbReference>
<dbReference type="PANTHER" id="PTHR10015:SF450">
    <property type="entry name" value="HEAT STRESS TRANSCRIPTION FACTOR A-2E"/>
    <property type="match status" value="1"/>
</dbReference>
<dbReference type="Pfam" id="PF00447">
    <property type="entry name" value="HSF_DNA-bind"/>
    <property type="match status" value="1"/>
</dbReference>
<dbReference type="PRINTS" id="PR00056">
    <property type="entry name" value="HSFDOMAIN"/>
</dbReference>
<dbReference type="SMART" id="SM00415">
    <property type="entry name" value="HSF"/>
    <property type="match status" value="1"/>
</dbReference>
<dbReference type="SUPFAM" id="SSF46785">
    <property type="entry name" value="Winged helix' DNA-binding domain"/>
    <property type="match status" value="1"/>
</dbReference>
<dbReference type="PROSITE" id="PS00434">
    <property type="entry name" value="HSF_DOMAIN"/>
    <property type="match status" value="1"/>
</dbReference>
<gene>
    <name type="primary">HSFA2E</name>
    <name type="synonym">HSF12</name>
    <name type="ordered locus">Os03g0795900</name>
    <name type="ordered locus">LOC_Os03g58160</name>
    <name type="ORF">OsJ_012388</name>
    <name type="ORF">OSJNBb0021G19.9</name>
</gene>
<evidence type="ECO:0000250" key="1"/>
<evidence type="ECO:0000255" key="2"/>
<evidence type="ECO:0000256" key="3">
    <source>
        <dbReference type="SAM" id="MobiDB-lite"/>
    </source>
</evidence>
<evidence type="ECO:0000269" key="4">
    <source>
    </source>
</evidence>
<evidence type="ECO:0000269" key="5">
    <source>
    </source>
</evidence>
<evidence type="ECO:0000305" key="6"/>
<evidence type="ECO:0000305" key="7">
    <source>
    </source>
</evidence>
<organism>
    <name type="scientific">Oryza sativa subsp. japonica</name>
    <name type="common">Rice</name>
    <dbReference type="NCBI Taxonomy" id="39947"/>
    <lineage>
        <taxon>Eukaryota</taxon>
        <taxon>Viridiplantae</taxon>
        <taxon>Streptophyta</taxon>
        <taxon>Embryophyta</taxon>
        <taxon>Tracheophyta</taxon>
        <taxon>Spermatophyta</taxon>
        <taxon>Magnoliopsida</taxon>
        <taxon>Liliopsida</taxon>
        <taxon>Poales</taxon>
        <taxon>Poaceae</taxon>
        <taxon>BOP clade</taxon>
        <taxon>Oryzoideae</taxon>
        <taxon>Oryzeae</taxon>
        <taxon>Oryzinae</taxon>
        <taxon>Oryza</taxon>
        <taxon>Oryza sativa</taxon>
    </lineage>
</organism>
<protein>
    <recommendedName>
        <fullName>Heat stress transcription factor A-2e</fullName>
    </recommendedName>
    <alternativeName>
        <fullName>Heat stress transcription factor 12</fullName>
        <shortName>OsHsf-12</shortName>
    </alternativeName>
</protein>
<comment type="function">
    <text evidence="4">Transcriptional activator expressed upon environmental stress that specifically binds DNA of heat shock promoter elements (HSE). Involved in heat stress response.</text>
</comment>
<comment type="subunit">
    <text evidence="1">Homotrimer.</text>
</comment>
<comment type="subcellular location">
    <subcellularLocation>
        <location evidence="7">Cytoplasm</location>
    </subcellularLocation>
    <subcellularLocation>
        <location evidence="4">Nucleus</location>
    </subcellularLocation>
</comment>
<comment type="induction">
    <text evidence="4">By heat stress.</text>
</comment>
<comment type="domain">
    <text evidence="5">The hydrophobic-rich region (HR-A/B) corresponds to the oligomerization domain. AHA motifs are transcriptional activator elements.</text>
</comment>
<comment type="PTM">
    <text evidence="1">Exhibits temperature-dependent phosphorylation.</text>
</comment>
<comment type="similarity">
    <text evidence="6">Belongs to the HSF family. Class A subfamily.</text>
</comment>
<feature type="chain" id="PRO_0000350825" description="Heat stress transcription factor A-2e">
    <location>
        <begin position="1"/>
        <end position="357"/>
    </location>
</feature>
<feature type="region of interest" description="Hydrophobic repeat HR-A/B">
    <location>
        <begin position="158"/>
        <end position="208"/>
    </location>
</feature>
<feature type="region of interest" description="Disordered" evidence="3">
    <location>
        <begin position="231"/>
        <end position="357"/>
    </location>
</feature>
<feature type="coiled-coil region" evidence="2">
    <location>
        <begin position="150"/>
        <end position="202"/>
    </location>
</feature>
<feature type="short sequence motif" description="Bipartite nuclear localization signal" evidence="2">
    <location>
        <begin position="223"/>
        <end position="238"/>
    </location>
</feature>
<feature type="short sequence motif" description="AHA">
    <location>
        <begin position="314"/>
        <end position="323"/>
    </location>
</feature>
<feature type="short sequence motif" description="Nuclear export signal" evidence="2">
    <location>
        <begin position="341"/>
        <end position="348"/>
    </location>
</feature>
<feature type="compositionally biased region" description="Polar residues" evidence="3">
    <location>
        <begin position="249"/>
        <end position="259"/>
    </location>
</feature>
<feature type="compositionally biased region" description="Basic and acidic residues" evidence="3">
    <location>
        <begin position="319"/>
        <end position="331"/>
    </location>
</feature>
<feature type="compositionally biased region" description="Polar residues" evidence="3">
    <location>
        <begin position="348"/>
        <end position="357"/>
    </location>
</feature>
<feature type="sequence conflict" description="In Ref. 6; AK068660." evidence="6" ref="6">
    <original>S</original>
    <variation>G</variation>
    <location>
        <position position="124"/>
    </location>
</feature>
<name>HFA2E_ORYSJ</name>
<accession>Q6F388</accession>
<accession>A0A0P0W424</accession>
<proteinExistence type="evidence at transcript level"/>